<evidence type="ECO:0000255" key="1"/>
<evidence type="ECO:0000255" key="2">
    <source>
        <dbReference type="HAMAP-Rule" id="MF_01869"/>
    </source>
</evidence>
<proteinExistence type="inferred from homology"/>
<feature type="chain" id="PRO_0000382972" description="Probable 4-amino-4-deoxy-L-arabinose-phosphoundecaprenol flippase subunit ArnE">
    <location>
        <begin position="1"/>
        <end position="111"/>
    </location>
</feature>
<feature type="topological domain" description="Cytoplasmic" evidence="1">
    <location>
        <begin position="1"/>
        <end position="35"/>
    </location>
</feature>
<feature type="transmembrane region" description="Helical" evidence="2">
    <location>
        <begin position="36"/>
        <end position="56"/>
    </location>
</feature>
<feature type="topological domain" description="Periplasmic" evidence="1">
    <location>
        <begin position="57"/>
        <end position="60"/>
    </location>
</feature>
<feature type="transmembrane region" description="Helical" evidence="2">
    <location>
        <begin position="61"/>
        <end position="81"/>
    </location>
</feature>
<feature type="topological domain" description="Cytoplasmic" evidence="1">
    <location>
        <begin position="82"/>
        <end position="87"/>
    </location>
</feature>
<feature type="transmembrane region" description="Helical" evidence="2">
    <location>
        <begin position="88"/>
        <end position="108"/>
    </location>
</feature>
<feature type="topological domain" description="Periplasmic" evidence="1">
    <location>
        <begin position="109"/>
        <end position="111"/>
    </location>
</feature>
<feature type="domain" description="EamA" evidence="2">
    <location>
        <begin position="40"/>
        <end position="109"/>
    </location>
</feature>
<gene>
    <name evidence="2" type="primary">arnE</name>
    <name type="ordered locus">ECIAI1_2335</name>
</gene>
<name>ARNE_ECO8A</name>
<keyword id="KW-0997">Cell inner membrane</keyword>
<keyword id="KW-1003">Cell membrane</keyword>
<keyword id="KW-0441">Lipid A biosynthesis</keyword>
<keyword id="KW-0444">Lipid biosynthesis</keyword>
<keyword id="KW-0443">Lipid metabolism</keyword>
<keyword id="KW-0448">Lipopolysaccharide biosynthesis</keyword>
<keyword id="KW-0472">Membrane</keyword>
<keyword id="KW-0812">Transmembrane</keyword>
<keyword id="KW-1133">Transmembrane helix</keyword>
<keyword id="KW-0813">Transport</keyword>
<dbReference type="EMBL" id="CU928160">
    <property type="protein sequence ID" value="CAQ99177.1"/>
    <property type="molecule type" value="Genomic_DNA"/>
</dbReference>
<dbReference type="RefSeq" id="WP_000638031.1">
    <property type="nucleotide sequence ID" value="NC_011741.1"/>
</dbReference>
<dbReference type="SMR" id="B7M5U0"/>
<dbReference type="GeneID" id="93774916"/>
<dbReference type="KEGG" id="ecr:ECIAI1_2335"/>
<dbReference type="HOGENOM" id="CLU_131462_5_1_6"/>
<dbReference type="UniPathway" id="UPA00030"/>
<dbReference type="GO" id="GO:0005886">
    <property type="term" value="C:plasma membrane"/>
    <property type="evidence" value="ECO:0007669"/>
    <property type="project" value="UniProtKB-SubCell"/>
</dbReference>
<dbReference type="GO" id="GO:1901505">
    <property type="term" value="F:carbohydrate derivative transmembrane transporter activity"/>
    <property type="evidence" value="ECO:0007669"/>
    <property type="project" value="InterPro"/>
</dbReference>
<dbReference type="GO" id="GO:0009245">
    <property type="term" value="P:lipid A biosynthetic process"/>
    <property type="evidence" value="ECO:0007669"/>
    <property type="project" value="UniProtKB-UniRule"/>
</dbReference>
<dbReference type="GO" id="GO:0009103">
    <property type="term" value="P:lipopolysaccharide biosynthetic process"/>
    <property type="evidence" value="ECO:0007669"/>
    <property type="project" value="UniProtKB-UniRule"/>
</dbReference>
<dbReference type="FunFam" id="1.10.3730.20:FF:000002">
    <property type="entry name" value="Probable 4-amino-4-deoxy-L-arabinose-phosphoundecaprenol flippase subunit ArnE"/>
    <property type="match status" value="1"/>
</dbReference>
<dbReference type="Gene3D" id="1.10.3730.20">
    <property type="match status" value="1"/>
</dbReference>
<dbReference type="HAMAP" id="MF_01869">
    <property type="entry name" value="Flippase_ArnE"/>
    <property type="match status" value="1"/>
</dbReference>
<dbReference type="InterPro" id="IPR000620">
    <property type="entry name" value="EamA_dom"/>
</dbReference>
<dbReference type="InterPro" id="IPR022883">
    <property type="entry name" value="Flippase_ArnE"/>
</dbReference>
<dbReference type="InterPro" id="IPR000390">
    <property type="entry name" value="Small_drug/metabolite_transptr"/>
</dbReference>
<dbReference type="NCBIfam" id="NF011625">
    <property type="entry name" value="PRK15051.1"/>
    <property type="match status" value="1"/>
</dbReference>
<dbReference type="PANTHER" id="PTHR30561:SF23">
    <property type="entry name" value="4-AMINO-4-DEOXY-L-ARABINOSE-PHOSPHOUNDECAPRENOL FLIPPASE SUBUNIT ARNE-RELATED"/>
    <property type="match status" value="1"/>
</dbReference>
<dbReference type="PANTHER" id="PTHR30561">
    <property type="entry name" value="SMR FAMILY PROTON-DEPENDENT DRUG EFFLUX TRANSPORTER SUGE"/>
    <property type="match status" value="1"/>
</dbReference>
<dbReference type="Pfam" id="PF00892">
    <property type="entry name" value="EamA"/>
    <property type="match status" value="1"/>
</dbReference>
<dbReference type="SUPFAM" id="SSF103481">
    <property type="entry name" value="Multidrug resistance efflux transporter EmrE"/>
    <property type="match status" value="1"/>
</dbReference>
<sequence length="111" mass="12192">MIWLTLVFASLLSVAGQLCQKQATCFVAINKRRKHIVLWLGLALACLGLAMVLWLLVLQNVPVGIAYPMLSLNFVWVTLAAVKLWHEPVSPRHWCGVAFIIGGIVILGSTV</sequence>
<organism>
    <name type="scientific">Escherichia coli O8 (strain IAI1)</name>
    <dbReference type="NCBI Taxonomy" id="585034"/>
    <lineage>
        <taxon>Bacteria</taxon>
        <taxon>Pseudomonadati</taxon>
        <taxon>Pseudomonadota</taxon>
        <taxon>Gammaproteobacteria</taxon>
        <taxon>Enterobacterales</taxon>
        <taxon>Enterobacteriaceae</taxon>
        <taxon>Escherichia</taxon>
    </lineage>
</organism>
<protein>
    <recommendedName>
        <fullName evidence="2">Probable 4-amino-4-deoxy-L-arabinose-phosphoundecaprenol flippase subunit ArnE</fullName>
        <shortName evidence="2">L-Ara4N-phosphoundecaprenol flippase subunit ArnE</shortName>
    </recommendedName>
    <alternativeName>
        <fullName evidence="2">Undecaprenyl phosphate-aminoarabinose flippase subunit ArnE</fullName>
    </alternativeName>
</protein>
<accession>B7M5U0</accession>
<reference key="1">
    <citation type="journal article" date="2009" name="PLoS Genet.">
        <title>Organised genome dynamics in the Escherichia coli species results in highly diverse adaptive paths.</title>
        <authorList>
            <person name="Touchon M."/>
            <person name="Hoede C."/>
            <person name="Tenaillon O."/>
            <person name="Barbe V."/>
            <person name="Baeriswyl S."/>
            <person name="Bidet P."/>
            <person name="Bingen E."/>
            <person name="Bonacorsi S."/>
            <person name="Bouchier C."/>
            <person name="Bouvet O."/>
            <person name="Calteau A."/>
            <person name="Chiapello H."/>
            <person name="Clermont O."/>
            <person name="Cruveiller S."/>
            <person name="Danchin A."/>
            <person name="Diard M."/>
            <person name="Dossat C."/>
            <person name="Karoui M.E."/>
            <person name="Frapy E."/>
            <person name="Garry L."/>
            <person name="Ghigo J.M."/>
            <person name="Gilles A.M."/>
            <person name="Johnson J."/>
            <person name="Le Bouguenec C."/>
            <person name="Lescat M."/>
            <person name="Mangenot S."/>
            <person name="Martinez-Jehanne V."/>
            <person name="Matic I."/>
            <person name="Nassif X."/>
            <person name="Oztas S."/>
            <person name="Petit M.A."/>
            <person name="Pichon C."/>
            <person name="Rouy Z."/>
            <person name="Ruf C.S."/>
            <person name="Schneider D."/>
            <person name="Tourret J."/>
            <person name="Vacherie B."/>
            <person name="Vallenet D."/>
            <person name="Medigue C."/>
            <person name="Rocha E.P.C."/>
            <person name="Denamur E."/>
        </authorList>
    </citation>
    <scope>NUCLEOTIDE SEQUENCE [LARGE SCALE GENOMIC DNA]</scope>
    <source>
        <strain>IAI1</strain>
    </source>
</reference>
<comment type="function">
    <text evidence="2">Translocates 4-amino-4-deoxy-L-arabinose-phosphoundecaprenol (alpha-L-Ara4N-phosphoundecaprenol) from the cytoplasmic to the periplasmic side of the inner membrane.</text>
</comment>
<comment type="pathway">
    <text evidence="2">Bacterial outer membrane biogenesis; lipopolysaccharide biosynthesis.</text>
</comment>
<comment type="subunit">
    <text evidence="2">Heterodimer of ArnE and ArnF.</text>
</comment>
<comment type="subcellular location">
    <subcellularLocation>
        <location evidence="2">Cell inner membrane</location>
        <topology evidence="2">Multi-pass membrane protein</topology>
    </subcellularLocation>
</comment>
<comment type="similarity">
    <text evidence="2">Belongs to the ArnE family.</text>
</comment>